<dbReference type="EC" id="2.3.1.109" evidence="1"/>
<dbReference type="EMBL" id="AE005174">
    <property type="protein sequence ID" value="AAG56733.1"/>
    <property type="molecule type" value="Genomic_DNA"/>
</dbReference>
<dbReference type="EMBL" id="BA000007">
    <property type="protein sequence ID" value="BAB35876.1"/>
    <property type="molecule type" value="Genomic_DNA"/>
</dbReference>
<dbReference type="PIR" id="A85784">
    <property type="entry name" value="A85784"/>
</dbReference>
<dbReference type="PIR" id="E90935">
    <property type="entry name" value="E90935"/>
</dbReference>
<dbReference type="RefSeq" id="NP_310480.1">
    <property type="nucleotide sequence ID" value="NC_002695.1"/>
</dbReference>
<dbReference type="RefSeq" id="WP_000989419.1">
    <property type="nucleotide sequence ID" value="NZ_VOAI01000007.1"/>
</dbReference>
<dbReference type="SMR" id="P0AE38"/>
<dbReference type="STRING" id="155864.Z2779"/>
<dbReference type="GeneID" id="75171814"/>
<dbReference type="GeneID" id="913079"/>
<dbReference type="KEGG" id="ece:Z2779"/>
<dbReference type="KEGG" id="ecs:ECs_2453"/>
<dbReference type="PATRIC" id="fig|386585.9.peg.2567"/>
<dbReference type="eggNOG" id="COG3138">
    <property type="taxonomic scope" value="Bacteria"/>
</dbReference>
<dbReference type="HOGENOM" id="CLU_057655_0_0_6"/>
<dbReference type="OMA" id="FDGGPHF"/>
<dbReference type="UniPathway" id="UPA00185">
    <property type="reaction ID" value="UER00279"/>
</dbReference>
<dbReference type="Proteomes" id="UP000000558">
    <property type="component" value="Chromosome"/>
</dbReference>
<dbReference type="Proteomes" id="UP000002519">
    <property type="component" value="Chromosome"/>
</dbReference>
<dbReference type="GO" id="GO:0008791">
    <property type="term" value="F:arginine N-succinyltransferase activity"/>
    <property type="evidence" value="ECO:0007669"/>
    <property type="project" value="UniProtKB-UniRule"/>
</dbReference>
<dbReference type="GO" id="GO:0019544">
    <property type="term" value="P:arginine catabolic process to glutamate"/>
    <property type="evidence" value="ECO:0007669"/>
    <property type="project" value="UniProtKB-UniRule"/>
</dbReference>
<dbReference type="GO" id="GO:0019545">
    <property type="term" value="P:arginine catabolic process to succinate"/>
    <property type="evidence" value="ECO:0007669"/>
    <property type="project" value="UniProtKB-UniRule"/>
</dbReference>
<dbReference type="Gene3D" id="2.40.40.20">
    <property type="match status" value="1"/>
</dbReference>
<dbReference type="Gene3D" id="3.40.630.30">
    <property type="match status" value="1"/>
</dbReference>
<dbReference type="HAMAP" id="MF_01171">
    <property type="entry name" value="AstA"/>
    <property type="match status" value="1"/>
</dbReference>
<dbReference type="InterPro" id="IPR016181">
    <property type="entry name" value="Acyl_CoA_acyltransferase"/>
</dbReference>
<dbReference type="InterPro" id="IPR007041">
    <property type="entry name" value="Arg_succinylTrfase_AstA/AruG"/>
</dbReference>
<dbReference type="InterPro" id="IPR017650">
    <property type="entry name" value="Arginine_N-succinylTrfase"/>
</dbReference>
<dbReference type="NCBIfam" id="TIGR03243">
    <property type="entry name" value="arg_catab_AOST"/>
    <property type="match status" value="1"/>
</dbReference>
<dbReference type="NCBIfam" id="TIGR03244">
    <property type="entry name" value="arg_catab_AstA"/>
    <property type="match status" value="1"/>
</dbReference>
<dbReference type="NCBIfam" id="NF007770">
    <property type="entry name" value="PRK10456.1"/>
    <property type="match status" value="1"/>
</dbReference>
<dbReference type="PANTHER" id="PTHR30420:SF1">
    <property type="entry name" value="ARGININE N-SUCCINYLTRANSFERASE"/>
    <property type="match status" value="1"/>
</dbReference>
<dbReference type="PANTHER" id="PTHR30420">
    <property type="entry name" value="N-SUCCINYLARGININE DIHYDROLASE"/>
    <property type="match status" value="1"/>
</dbReference>
<dbReference type="Pfam" id="PF04958">
    <property type="entry name" value="AstA"/>
    <property type="match status" value="1"/>
</dbReference>
<dbReference type="SUPFAM" id="SSF55729">
    <property type="entry name" value="Acyl-CoA N-acyltransferases (Nat)"/>
    <property type="match status" value="1"/>
</dbReference>
<comment type="function">
    <text evidence="1">Catalyzes the transfer of succinyl-CoA to arginine to produce N(2)-succinylarginine.</text>
</comment>
<comment type="catalytic activity">
    <reaction evidence="1">
        <text>succinyl-CoA + L-arginine = N(2)-succinyl-L-arginine + CoA + H(+)</text>
        <dbReference type="Rhea" id="RHEA:15185"/>
        <dbReference type="ChEBI" id="CHEBI:15378"/>
        <dbReference type="ChEBI" id="CHEBI:32682"/>
        <dbReference type="ChEBI" id="CHEBI:57287"/>
        <dbReference type="ChEBI" id="CHEBI:57292"/>
        <dbReference type="ChEBI" id="CHEBI:58241"/>
        <dbReference type="EC" id="2.3.1.109"/>
    </reaction>
</comment>
<comment type="pathway">
    <text evidence="1">Amino-acid degradation; L-arginine degradation via AST pathway; L-glutamate and succinate from L-arginine: step 1/5.</text>
</comment>
<comment type="similarity">
    <text evidence="1">Belongs to the arginine N-succinyltransferase family.</text>
</comment>
<name>ASTA_ECO57</name>
<organism>
    <name type="scientific">Escherichia coli O157:H7</name>
    <dbReference type="NCBI Taxonomy" id="83334"/>
    <lineage>
        <taxon>Bacteria</taxon>
        <taxon>Pseudomonadati</taxon>
        <taxon>Pseudomonadota</taxon>
        <taxon>Gammaproteobacteria</taxon>
        <taxon>Enterobacterales</taxon>
        <taxon>Enterobacteriaceae</taxon>
        <taxon>Escherichia</taxon>
    </lineage>
</organism>
<evidence type="ECO:0000255" key="1">
    <source>
        <dbReference type="HAMAP-Rule" id="MF_01171"/>
    </source>
</evidence>
<feature type="chain" id="PRO_0000064713" description="Arginine N-succinyltransferase">
    <location>
        <begin position="1"/>
        <end position="344"/>
    </location>
</feature>
<feature type="active site" description="Proton donor" evidence="1">
    <location>
        <position position="229"/>
    </location>
</feature>
<feature type="binding site" evidence="1">
    <location>
        <position position="125"/>
    </location>
    <ligand>
        <name>succinyl-CoA</name>
        <dbReference type="ChEBI" id="CHEBI:57292"/>
    </ligand>
</feature>
<accession>P0AE38</accession>
<accession>P76218</accession>
<sequence>MMVIRPVERSDVSALMQLASKTGGGLTSLPANEATLSARIERAIKTWQGELPKSEQGYVFVLEDSETGTVAGICAIEVAVGLNDPWYNYRVGTLVHASKELNVYNALPTLFLSNDHTGSSELCTLFLDPDWRKEGNGYLLSKSRFMFMAAFRDKFNDKVVAEMRGVIDEHGYSPFWQSLGKRFFSMDFSRADFLCGTGQKAFIAELMPKHPIYTHFLSQEAQDVIGQVHPQTAPARAVLEKEGFRYRNYIDIFDGGPTLECDIDRVRAIRKSRLVEVAEGQPAQGDFPACLVANENYHHFRVVLVRTDPATERLILTAAQLDALKCHAGDRVRLVRLCAEEKTA</sequence>
<reference key="1">
    <citation type="journal article" date="2001" name="Nature">
        <title>Genome sequence of enterohaemorrhagic Escherichia coli O157:H7.</title>
        <authorList>
            <person name="Perna N.T."/>
            <person name="Plunkett G. III"/>
            <person name="Burland V."/>
            <person name="Mau B."/>
            <person name="Glasner J.D."/>
            <person name="Rose D.J."/>
            <person name="Mayhew G.F."/>
            <person name="Evans P.S."/>
            <person name="Gregor J."/>
            <person name="Kirkpatrick H.A."/>
            <person name="Posfai G."/>
            <person name="Hackett J."/>
            <person name="Klink S."/>
            <person name="Boutin A."/>
            <person name="Shao Y."/>
            <person name="Miller L."/>
            <person name="Grotbeck E.J."/>
            <person name="Davis N.W."/>
            <person name="Lim A."/>
            <person name="Dimalanta E.T."/>
            <person name="Potamousis K."/>
            <person name="Apodaca J."/>
            <person name="Anantharaman T.S."/>
            <person name="Lin J."/>
            <person name="Yen G."/>
            <person name="Schwartz D.C."/>
            <person name="Welch R.A."/>
            <person name="Blattner F.R."/>
        </authorList>
    </citation>
    <scope>NUCLEOTIDE SEQUENCE [LARGE SCALE GENOMIC DNA]</scope>
    <source>
        <strain>O157:H7 / EDL933 / ATCC 700927 / EHEC</strain>
    </source>
</reference>
<reference key="2">
    <citation type="journal article" date="2001" name="DNA Res.">
        <title>Complete genome sequence of enterohemorrhagic Escherichia coli O157:H7 and genomic comparison with a laboratory strain K-12.</title>
        <authorList>
            <person name="Hayashi T."/>
            <person name="Makino K."/>
            <person name="Ohnishi M."/>
            <person name="Kurokawa K."/>
            <person name="Ishii K."/>
            <person name="Yokoyama K."/>
            <person name="Han C.-G."/>
            <person name="Ohtsubo E."/>
            <person name="Nakayama K."/>
            <person name="Murata T."/>
            <person name="Tanaka M."/>
            <person name="Tobe T."/>
            <person name="Iida T."/>
            <person name="Takami H."/>
            <person name="Honda T."/>
            <person name="Sasakawa C."/>
            <person name="Ogasawara N."/>
            <person name="Yasunaga T."/>
            <person name="Kuhara S."/>
            <person name="Shiba T."/>
            <person name="Hattori M."/>
            <person name="Shinagawa H."/>
        </authorList>
    </citation>
    <scope>NUCLEOTIDE SEQUENCE [LARGE SCALE GENOMIC DNA]</scope>
    <source>
        <strain>O157:H7 / Sakai / RIMD 0509952 / EHEC</strain>
    </source>
</reference>
<protein>
    <recommendedName>
        <fullName evidence="1">Arginine N-succinyltransferase</fullName>
        <shortName evidence="1">AST</shortName>
        <ecNumber evidence="1">2.3.1.109</ecNumber>
    </recommendedName>
    <alternativeName>
        <fullName evidence="1">AOST</fullName>
    </alternativeName>
</protein>
<keyword id="KW-0012">Acyltransferase</keyword>
<keyword id="KW-0056">Arginine metabolism</keyword>
<keyword id="KW-1185">Reference proteome</keyword>
<keyword id="KW-0808">Transferase</keyword>
<proteinExistence type="inferred from homology"/>
<gene>
    <name evidence="1" type="primary">astA</name>
    <name type="ordered locus">Z2779</name>
    <name type="ordered locus">ECs2453</name>
</gene>